<reference key="1">
    <citation type="submission" date="2005-10" db="EMBL/GenBank/DDBJ databases">
        <title>Complete sequence of chromosome 2 of Burkholderia sp. 383.</title>
        <authorList>
            <consortium name="US DOE Joint Genome Institute"/>
            <person name="Copeland A."/>
            <person name="Lucas S."/>
            <person name="Lapidus A."/>
            <person name="Barry K."/>
            <person name="Detter J.C."/>
            <person name="Glavina T."/>
            <person name="Hammon N."/>
            <person name="Israni S."/>
            <person name="Pitluck S."/>
            <person name="Chain P."/>
            <person name="Malfatti S."/>
            <person name="Shin M."/>
            <person name="Vergez L."/>
            <person name="Schmutz J."/>
            <person name="Larimer F."/>
            <person name="Land M."/>
            <person name="Kyrpides N."/>
            <person name="Lykidis A."/>
            <person name="Richardson P."/>
        </authorList>
    </citation>
    <scope>NUCLEOTIDE SEQUENCE [LARGE SCALE GENOMIC DNA]</scope>
    <source>
        <strain>ATCC 17760 / DSM 23089 / LMG 22485 / NCIMB 9086 / R18194 / 383</strain>
    </source>
</reference>
<protein>
    <recommendedName>
        <fullName evidence="1">Methionine import ATP-binding protein MetN 2</fullName>
        <ecNumber evidence="1">7.4.2.11</ecNumber>
    </recommendedName>
</protein>
<sequence>MTQLFDTLGFIDTSAARTGAAAATHDAAATSTEPAGPAGAAAVSLEQVGKVFATPRGQAAALRDVTLDVRRGEVFGIIGRSGAGKSTLLRLVNGLERPSSGRVRVQGVDVGALDEDGLVALRRRTGMVFQHFNLLSAKTVFENVALPLKIAGVPKAERVRKVEALLELVGLAAKRDAYPASLSGGQKQRVGIARALVHDPEVLLCDEATSALDPETTQSILALLADINRRLGLTIVLITHEMEVIRAVCDTVAVIEQGEVVETGPVWRVFGDPRHGATRALLSTLVHDLPAELAARVQPLPEQAALPDGAQVVLDVRYTGESGGEPDVGALAAALGGSVRFLHGGIERIQGHAQGRLVIAAALRAEDAGQSTARGGAVAALLERARRHANHAEVLGYV</sequence>
<gene>
    <name evidence="1" type="primary">metN2</name>
    <name type="ordered locus">Bcep18194_B0311</name>
</gene>
<name>METN2_BURL3</name>
<dbReference type="EC" id="7.4.2.11" evidence="1"/>
<dbReference type="EMBL" id="CP000152">
    <property type="protein sequence ID" value="ABB10427.1"/>
    <property type="molecule type" value="Genomic_DNA"/>
</dbReference>
<dbReference type="RefSeq" id="WP_011353925.1">
    <property type="nucleotide sequence ID" value="NC_007511.1"/>
</dbReference>
<dbReference type="SMR" id="Q39AT4"/>
<dbReference type="GeneID" id="45096697"/>
<dbReference type="KEGG" id="bur:Bcep18194_B0311"/>
<dbReference type="PATRIC" id="fig|482957.22.peg.3895"/>
<dbReference type="HOGENOM" id="CLU_000604_1_3_4"/>
<dbReference type="Proteomes" id="UP000002705">
    <property type="component" value="Chromosome 2"/>
</dbReference>
<dbReference type="GO" id="GO:0005886">
    <property type="term" value="C:plasma membrane"/>
    <property type="evidence" value="ECO:0007669"/>
    <property type="project" value="UniProtKB-SubCell"/>
</dbReference>
<dbReference type="GO" id="GO:0033232">
    <property type="term" value="F:ABC-type D-methionine transporter activity"/>
    <property type="evidence" value="ECO:0007669"/>
    <property type="project" value="UniProtKB-EC"/>
</dbReference>
<dbReference type="GO" id="GO:0005524">
    <property type="term" value="F:ATP binding"/>
    <property type="evidence" value="ECO:0007669"/>
    <property type="project" value="UniProtKB-KW"/>
</dbReference>
<dbReference type="GO" id="GO:0016887">
    <property type="term" value="F:ATP hydrolysis activity"/>
    <property type="evidence" value="ECO:0007669"/>
    <property type="project" value="InterPro"/>
</dbReference>
<dbReference type="CDD" id="cd03258">
    <property type="entry name" value="ABC_MetN_methionine_transporter"/>
    <property type="match status" value="1"/>
</dbReference>
<dbReference type="FunFam" id="3.40.50.300:FF:000056">
    <property type="entry name" value="Cell division ATP-binding protein FtsE"/>
    <property type="match status" value="1"/>
</dbReference>
<dbReference type="Gene3D" id="3.30.70.260">
    <property type="match status" value="1"/>
</dbReference>
<dbReference type="Gene3D" id="3.40.50.300">
    <property type="entry name" value="P-loop containing nucleotide triphosphate hydrolases"/>
    <property type="match status" value="1"/>
</dbReference>
<dbReference type="InterPro" id="IPR003593">
    <property type="entry name" value="AAA+_ATPase"/>
</dbReference>
<dbReference type="InterPro" id="IPR003439">
    <property type="entry name" value="ABC_transporter-like_ATP-bd"/>
</dbReference>
<dbReference type="InterPro" id="IPR017871">
    <property type="entry name" value="ABC_transporter-like_CS"/>
</dbReference>
<dbReference type="InterPro" id="IPR045865">
    <property type="entry name" value="ACT-like_dom_sf"/>
</dbReference>
<dbReference type="InterPro" id="IPR041701">
    <property type="entry name" value="MetN_ABC"/>
</dbReference>
<dbReference type="InterPro" id="IPR050086">
    <property type="entry name" value="MetN_ABC_transporter-like"/>
</dbReference>
<dbReference type="InterPro" id="IPR018449">
    <property type="entry name" value="NIL_domain"/>
</dbReference>
<dbReference type="InterPro" id="IPR027417">
    <property type="entry name" value="P-loop_NTPase"/>
</dbReference>
<dbReference type="PANTHER" id="PTHR43166">
    <property type="entry name" value="AMINO ACID IMPORT ATP-BINDING PROTEIN"/>
    <property type="match status" value="1"/>
</dbReference>
<dbReference type="PANTHER" id="PTHR43166:SF30">
    <property type="entry name" value="METHIONINE IMPORT ATP-BINDING PROTEIN METN"/>
    <property type="match status" value="1"/>
</dbReference>
<dbReference type="Pfam" id="PF00005">
    <property type="entry name" value="ABC_tran"/>
    <property type="match status" value="1"/>
</dbReference>
<dbReference type="Pfam" id="PF09383">
    <property type="entry name" value="NIL"/>
    <property type="match status" value="1"/>
</dbReference>
<dbReference type="SMART" id="SM00382">
    <property type="entry name" value="AAA"/>
    <property type="match status" value="1"/>
</dbReference>
<dbReference type="SMART" id="SM00930">
    <property type="entry name" value="NIL"/>
    <property type="match status" value="1"/>
</dbReference>
<dbReference type="SUPFAM" id="SSF55021">
    <property type="entry name" value="ACT-like"/>
    <property type="match status" value="1"/>
</dbReference>
<dbReference type="SUPFAM" id="SSF52540">
    <property type="entry name" value="P-loop containing nucleoside triphosphate hydrolases"/>
    <property type="match status" value="1"/>
</dbReference>
<dbReference type="PROSITE" id="PS00211">
    <property type="entry name" value="ABC_TRANSPORTER_1"/>
    <property type="match status" value="1"/>
</dbReference>
<dbReference type="PROSITE" id="PS50893">
    <property type="entry name" value="ABC_TRANSPORTER_2"/>
    <property type="match status" value="1"/>
</dbReference>
<dbReference type="PROSITE" id="PS51264">
    <property type="entry name" value="METN"/>
    <property type="match status" value="1"/>
</dbReference>
<organism>
    <name type="scientific">Burkholderia lata (strain ATCC 17760 / DSM 23089 / LMG 22485 / NCIMB 9086 / R18194 / 383)</name>
    <dbReference type="NCBI Taxonomy" id="482957"/>
    <lineage>
        <taxon>Bacteria</taxon>
        <taxon>Pseudomonadati</taxon>
        <taxon>Pseudomonadota</taxon>
        <taxon>Betaproteobacteria</taxon>
        <taxon>Burkholderiales</taxon>
        <taxon>Burkholderiaceae</taxon>
        <taxon>Burkholderia</taxon>
        <taxon>Burkholderia cepacia complex</taxon>
    </lineage>
</organism>
<proteinExistence type="inferred from homology"/>
<accession>Q39AT4</accession>
<feature type="chain" id="PRO_0000270270" description="Methionine import ATP-binding protein MetN 2">
    <location>
        <begin position="1"/>
        <end position="398"/>
    </location>
</feature>
<feature type="domain" description="ABC transporter" evidence="1">
    <location>
        <begin position="43"/>
        <end position="282"/>
    </location>
</feature>
<feature type="binding site" evidence="1">
    <location>
        <begin position="79"/>
        <end position="86"/>
    </location>
    <ligand>
        <name>ATP</name>
        <dbReference type="ChEBI" id="CHEBI:30616"/>
    </ligand>
</feature>
<comment type="function">
    <text evidence="1">Part of the ABC transporter complex MetNIQ involved in methionine import. Responsible for energy coupling to the transport system.</text>
</comment>
<comment type="catalytic activity">
    <reaction evidence="1">
        <text>L-methionine(out) + ATP + H2O = L-methionine(in) + ADP + phosphate + H(+)</text>
        <dbReference type="Rhea" id="RHEA:29779"/>
        <dbReference type="ChEBI" id="CHEBI:15377"/>
        <dbReference type="ChEBI" id="CHEBI:15378"/>
        <dbReference type="ChEBI" id="CHEBI:30616"/>
        <dbReference type="ChEBI" id="CHEBI:43474"/>
        <dbReference type="ChEBI" id="CHEBI:57844"/>
        <dbReference type="ChEBI" id="CHEBI:456216"/>
        <dbReference type="EC" id="7.4.2.11"/>
    </reaction>
</comment>
<comment type="catalytic activity">
    <reaction evidence="1">
        <text>D-methionine(out) + ATP + H2O = D-methionine(in) + ADP + phosphate + H(+)</text>
        <dbReference type="Rhea" id="RHEA:29767"/>
        <dbReference type="ChEBI" id="CHEBI:15377"/>
        <dbReference type="ChEBI" id="CHEBI:15378"/>
        <dbReference type="ChEBI" id="CHEBI:30616"/>
        <dbReference type="ChEBI" id="CHEBI:43474"/>
        <dbReference type="ChEBI" id="CHEBI:57932"/>
        <dbReference type="ChEBI" id="CHEBI:456216"/>
        <dbReference type="EC" id="7.4.2.11"/>
    </reaction>
</comment>
<comment type="subunit">
    <text evidence="1">The complex is composed of two ATP-binding proteins (MetN), two transmembrane proteins (MetI) and a solute-binding protein (MetQ).</text>
</comment>
<comment type="subcellular location">
    <subcellularLocation>
        <location evidence="1">Cell inner membrane</location>
        <topology evidence="1">Peripheral membrane protein</topology>
    </subcellularLocation>
</comment>
<comment type="similarity">
    <text evidence="1">Belongs to the ABC transporter superfamily. Methionine importer (TC 3.A.1.24) family.</text>
</comment>
<evidence type="ECO:0000255" key="1">
    <source>
        <dbReference type="HAMAP-Rule" id="MF_01719"/>
    </source>
</evidence>
<keyword id="KW-0029">Amino-acid transport</keyword>
<keyword id="KW-0067">ATP-binding</keyword>
<keyword id="KW-0997">Cell inner membrane</keyword>
<keyword id="KW-1003">Cell membrane</keyword>
<keyword id="KW-0472">Membrane</keyword>
<keyword id="KW-0547">Nucleotide-binding</keyword>
<keyword id="KW-1278">Translocase</keyword>
<keyword id="KW-0813">Transport</keyword>